<organism>
    <name type="scientific">Saccharolobus islandicus (strain M.16.27)</name>
    <name type="common">Sulfolobus islandicus</name>
    <dbReference type="NCBI Taxonomy" id="427318"/>
    <lineage>
        <taxon>Archaea</taxon>
        <taxon>Thermoproteota</taxon>
        <taxon>Thermoprotei</taxon>
        <taxon>Sulfolobales</taxon>
        <taxon>Sulfolobaceae</taxon>
        <taxon>Saccharolobus</taxon>
    </lineage>
</organism>
<name>DPCKG_SACI3</name>
<gene>
    <name type="ordered locus">M1627_1804</name>
</gene>
<sequence length="179" mass="20383">MEIRDNNKVNLCFAFDNLRKELSRPYGILFTNNKVFLDFVSKSIQQGFKVITVGDYVSRVLEENGIIPFLEVIDGKTKRSIPQHRAIVKNKEYRVTNEAGKIRFEIFEIIENILKDRDGGVVFVNGEEDLLVIPVILSANNGDIVIYGQPNAGAVVIIVNEMIKWRVRDILEKAVVEEC</sequence>
<accession>C3MZ47</accession>
<evidence type="ECO:0000255" key="1">
    <source>
        <dbReference type="HAMAP-Rule" id="MF_00590"/>
    </source>
</evidence>
<dbReference type="EC" id="2.7.1.237" evidence="1"/>
<dbReference type="EMBL" id="CP001401">
    <property type="protein sequence ID" value="ACP55679.1"/>
    <property type="molecule type" value="Genomic_DNA"/>
</dbReference>
<dbReference type="RefSeq" id="WP_012711668.1">
    <property type="nucleotide sequence ID" value="NC_012632.1"/>
</dbReference>
<dbReference type="SMR" id="C3MZ47"/>
<dbReference type="KEGG" id="sim:M1627_1804"/>
<dbReference type="HOGENOM" id="CLU_120795_1_0_2"/>
<dbReference type="UniPathway" id="UPA00241"/>
<dbReference type="Proteomes" id="UP000002307">
    <property type="component" value="Chromosome"/>
</dbReference>
<dbReference type="GO" id="GO:0005525">
    <property type="term" value="F:GTP binding"/>
    <property type="evidence" value="ECO:0007669"/>
    <property type="project" value="UniProtKB-UniRule"/>
</dbReference>
<dbReference type="GO" id="GO:0016301">
    <property type="term" value="F:kinase activity"/>
    <property type="evidence" value="ECO:0007669"/>
    <property type="project" value="UniProtKB-UniRule"/>
</dbReference>
<dbReference type="GO" id="GO:0015937">
    <property type="term" value="P:coenzyme A biosynthetic process"/>
    <property type="evidence" value="ECO:0007669"/>
    <property type="project" value="UniProtKB-UniRule"/>
</dbReference>
<dbReference type="HAMAP" id="MF_00590">
    <property type="entry name" value="Dephospho_CoA_kinase_GTP_dep"/>
    <property type="match status" value="1"/>
</dbReference>
<dbReference type="InterPro" id="IPR007164">
    <property type="entry name" value="GTP-dep_dephospho-CoA_kin"/>
</dbReference>
<dbReference type="PANTHER" id="PTHR40732:SF1">
    <property type="entry name" value="GTP-DEPENDENT DEPHOSPHO-COA KINASE"/>
    <property type="match status" value="1"/>
</dbReference>
<dbReference type="PANTHER" id="PTHR40732">
    <property type="entry name" value="UPF0218 PROTEIN TK1697"/>
    <property type="match status" value="1"/>
</dbReference>
<dbReference type="Pfam" id="PF04019">
    <property type="entry name" value="DUF359"/>
    <property type="match status" value="1"/>
</dbReference>
<dbReference type="PIRSF" id="PIRSF006533">
    <property type="entry name" value="UCP006533"/>
    <property type="match status" value="1"/>
</dbReference>
<comment type="function">
    <text evidence="1">Catalyzes the GTP-dependent phosphorylation of the 3'-hydroxyl group of dephosphocoenzyme A to form coenzyme A (CoA).</text>
</comment>
<comment type="catalytic activity">
    <reaction evidence="1">
        <text>3'-dephospho-CoA + GTP = GDP + CoA + H(+)</text>
        <dbReference type="Rhea" id="RHEA:61156"/>
        <dbReference type="ChEBI" id="CHEBI:15378"/>
        <dbReference type="ChEBI" id="CHEBI:37565"/>
        <dbReference type="ChEBI" id="CHEBI:57287"/>
        <dbReference type="ChEBI" id="CHEBI:57328"/>
        <dbReference type="ChEBI" id="CHEBI:58189"/>
        <dbReference type="EC" id="2.7.1.237"/>
    </reaction>
</comment>
<comment type="pathway">
    <text evidence="1">Cofactor biosynthesis; coenzyme A biosynthesis.</text>
</comment>
<comment type="similarity">
    <text evidence="1">Belongs to the GTP-dependent DPCK family.</text>
</comment>
<protein>
    <recommendedName>
        <fullName evidence="1">GTP-dependent dephospho-CoA kinase</fullName>
        <ecNumber evidence="1">2.7.1.237</ecNumber>
    </recommendedName>
    <alternativeName>
        <fullName evidence="1">Dephospho-coenzyme A kinase</fullName>
        <shortName evidence="1">DPCK</shortName>
    </alternativeName>
</protein>
<feature type="chain" id="PRO_1000212164" description="GTP-dependent dephospho-CoA kinase">
    <location>
        <begin position="1"/>
        <end position="179"/>
    </location>
</feature>
<feature type="binding site" evidence="1">
    <location>
        <position position="55"/>
    </location>
    <ligand>
        <name>GTP</name>
        <dbReference type="ChEBI" id="CHEBI:37565"/>
    </ligand>
</feature>
<feature type="binding site" evidence="1">
    <location>
        <position position="57"/>
    </location>
    <ligand>
        <name>GTP</name>
        <dbReference type="ChEBI" id="CHEBI:37565"/>
    </ligand>
</feature>
<feature type="binding site" evidence="1">
    <location>
        <position position="74"/>
    </location>
    <ligand>
        <name>GTP</name>
        <dbReference type="ChEBI" id="CHEBI:37565"/>
    </ligand>
</feature>
<feature type="binding site" evidence="1">
    <location>
        <position position="76"/>
    </location>
    <ligand>
        <name>GTP</name>
        <dbReference type="ChEBI" id="CHEBI:37565"/>
    </ligand>
</feature>
<feature type="binding site" evidence="1">
    <location>
        <position position="128"/>
    </location>
    <ligand>
        <name>GTP</name>
        <dbReference type="ChEBI" id="CHEBI:37565"/>
    </ligand>
</feature>
<reference key="1">
    <citation type="journal article" date="2009" name="Proc. Natl. Acad. Sci. U.S.A.">
        <title>Biogeography of the Sulfolobus islandicus pan-genome.</title>
        <authorList>
            <person name="Reno M.L."/>
            <person name="Held N.L."/>
            <person name="Fields C.J."/>
            <person name="Burke P.V."/>
            <person name="Whitaker R.J."/>
        </authorList>
    </citation>
    <scope>NUCLEOTIDE SEQUENCE [LARGE SCALE GENOMIC DNA]</scope>
    <source>
        <strain>M.16.27</strain>
    </source>
</reference>
<keyword id="KW-0173">Coenzyme A biosynthesis</keyword>
<keyword id="KW-0342">GTP-binding</keyword>
<keyword id="KW-0418">Kinase</keyword>
<keyword id="KW-0547">Nucleotide-binding</keyword>
<keyword id="KW-0808">Transferase</keyword>
<proteinExistence type="inferred from homology"/>